<comment type="function">
    <text evidence="2 5 6">Endoplasmic reticulum chaperone that plays a key role in protein folding and quality control in the endoplasmic reticulum lumen (By similarity). Involved in the correct folding of proteins and degradation of misfolded proteins via its interaction with DNAJC10/ERdj5, probably to facilitate the release of DNAJC10/ERdj5 from its substrate (By similarity). Acts as a key repressor of the EIF2AK3/PERK and ERN1/IRE1-mediated unfolded protein response (UPR). In the unstressed endoplasmic reticulum, recruited by DNAJB9/ERdj4 to the luminal region of ERN1/IRE1, leading to disrupt the dimerization of ERN1/IRE1, thereby inactivating ERN1/IRE1. Also binds and inactivates EIF2AK3/PERK in unstressed cells. Accumulation of misfolded protein in the endoplasmic reticulum causes release of HSPA5/BiP from ERN1/IRE1 and EIF2AK3/PERK, allowing their homodimerization and subsequent activation (By similarity). Plays an auxiliary role in post-translational transport of small presecretory proteins across endoplasmic reticulum (ER). May function as an allosteric modulator for SEC61 channel-forming translocon complex, likely cooperating with SEC62 to enable the productive insertion of these precursors into SEC61 channel. Appears to specifically regulate translocation of precursors having inhibitory residues in their mature region that weaken channel gating. May also play a role in apoptosis and cell proliferation (By similarity).</text>
</comment>
<comment type="catalytic activity">
    <reaction evidence="2">
        <text>ATP + H2O = ADP + phosphate + H(+)</text>
        <dbReference type="Rhea" id="RHEA:13065"/>
        <dbReference type="ChEBI" id="CHEBI:15377"/>
        <dbReference type="ChEBI" id="CHEBI:15378"/>
        <dbReference type="ChEBI" id="CHEBI:30616"/>
        <dbReference type="ChEBI" id="CHEBI:43474"/>
        <dbReference type="ChEBI" id="CHEBI:456216"/>
        <dbReference type="EC" id="3.6.4.10"/>
    </reaction>
</comment>
<comment type="activity regulation">
    <text evidence="2 5">The chaperone activity is regulated by ATP-induced allosteric coupling of the nucleotide-binding (NBD) and substrate-binding (SBD) domains (By similarity). In the ADP-bound and nucleotide-free (apo) states, the two domains have little interaction (By similarity). In contrast, in the ATP-bound state the two domains are tightly coupled, which results in drastically accelerated kinetics in both binding and release of polypeptide substrates (By similarity). J domain-containing co-chaperones (DNAJB9/ERdj4 or DNAJC10/ERdj5) stimulate the ATPase activity and are required for efficient substrate recognition by HSPA5/BiP. Homooligomerization inactivates participating HSPA5/BiP protomers and probably act as reservoirs to store HSPA5/BiP molecules when they are not needed by the cell (By similarity).</text>
</comment>
<comment type="subunit">
    <text evidence="2 5 6">Monomer and homooligomer; homooligomerization via the interdomain linker inactivates the chaperone activity and acts as a storage of HSPA5/BiP molecules (By similarity). Interacts with DNAJC1 (via J domain). Component of an EIF2 complex at least composed of CELF1/CUGBP1, CALR, CALR3, EIF2S1, EIF2S2, HSP90B1 and HSPA5. Part of a large chaperone multiprotein complex comprising DNAJB11, HSP90B1, HSPA5, HYOU, PDIA2, PDIA4, PDIA6, PPIB, SDF2L1, UGGT1 and very small amounts of ERP29, but not, or at very low levels, CALR nor CANX (By similarity). Interacts with TMEM132A and TRIM21 (By similarity). May form a complex with ERLEC1, OS9, SEL1L and SYVN1 (By similarity). Interacts with DNAJC10. Interacts with DNAJB9/ERdj4; leading to recruit HSPA5/BiP to ERN1/IRE1 (By similarity). Interacts with ERN1/IRE1 (via luminal domain); the interaction takes place following interaction with DNAJB9/ERdj4 and leads to inactivate ERN1/IRE1, the interaction also competitively inhibits ERN1 interaction with MANF (By similarity). Interacts directly with MANF (via SAP domain); the interaction inhibits ATP binding to HSPA5/BiP and subsequent nucleotide exchange (By similarity). Interacts with EIF2AK3/PERK (via luminal domain); interaction leads to inactivate EIF2AK3/PERK (By similarity). Interacts with MX1 (By similarity). Interacts with METTL23 (By similarity). Interacts with CEMIP; the interaction induces calcium leakage from the endoplasmic reticulum and cell migration (By similarity). Interacts with PCSK4 form; the interaction takes place in the endoplasmic reticulum (By similarity). Interacts with CIPC (By similarity). Interacts with CCDC88B (via C-terminus); the interaction opposes ERN1-mediated JNK activation, protecting against apoptosis (By similarity). Interacts with INPP5K; necessary for INPP5K localization at the endoplasmic reticulum (By similarity). Interacts with MANF; the interaction is direct (By similarity). Interacts with LOXL2; leading to activate the ERN1/IRE1-XBP1 pathway of the unfolded protein response (By similarity). Interacts with CLU under stressed condition; interaction increases CLU protein stability; facilitates its retrotranslocation and redistribution to the mitochondria; cooperatively suppress stress-induced apoptosis by stabilizing mitochondrial membrane integrity (By similarity). Interacts with CCDC47 (By similarity). Interacts with CLN3 (By similarity). Interacts with ELAPOR1; may regulate the function of HSPA5 in apoptosis and cell proliferation. Interacts with CASP7 (By similarity). Interacts with ILDR2; the interaction stabilizes ILDR2 expression (By similarity). Interacts with ADAM7 (By similarity).</text>
</comment>
<comment type="subcellular location">
    <subcellularLocation>
        <location evidence="5">Endoplasmic reticulum lumen</location>
    </subcellularLocation>
    <subcellularLocation>
        <location evidence="5">Melanosome</location>
    </subcellularLocation>
    <subcellularLocation>
        <location evidence="6">Cytoplasm</location>
    </subcellularLocation>
    <subcellularLocation>
        <location>Cell surface</location>
    </subcellularLocation>
    <text evidence="5">Identified by mass spectrometry in melanosome fractions from stage I to stage IV (By similarity). Localizes to the cell surface in epithelial cells; high levels of free iron promotes cell surface localization (By similarity).</text>
</comment>
<comment type="domain">
    <text evidence="2">The interdomain linker regulates the chaperone activity by mediating the formation of homooligomers. Homooligomers are formed by engagement of the interdomain linker of one HSPA5/BiP molecule as a typical substrate of an adjacent HSPA5/BiP molecule. HSPA5/BiP oligomerization inactivates participating HSPA5/BiP protomers. HSPA5/BiP oligomers probably act as reservoirs to store HSPA5/BiP molecules when they are not needed by the cell. When the levels of unfolded proteins rise, cells can rapidly break up these oligomers to make active monomers.</text>
</comment>
<comment type="PTM">
    <text evidence="2">In unstressed cells, AMPylation at Thr-518 by FICD inactivates the chaperome activity: AMPylated form is locked in a relatively inert state and only weakly stimulated by J domain-containing proteins. In response to endoplasmic reticulum stress, de-AMPylation by the same protein, FICD, restores the chaperone activity.</text>
</comment>
<comment type="similarity">
    <text evidence="9">Belongs to the heat shock protein 70 family.</text>
</comment>
<name>BIP_ICTTR</name>
<protein>
    <recommendedName>
        <fullName evidence="5">Endoplasmic reticulum chaperone BiP</fullName>
        <ecNumber evidence="5">3.6.4.10</ecNumber>
    </recommendedName>
    <alternativeName>
        <fullName evidence="5">78 kDa glucose-regulated protein</fullName>
        <shortName evidence="5">GRP-78</shortName>
    </alternativeName>
    <alternativeName>
        <fullName evidence="5">Binding-immunoglobulin protein</fullName>
        <shortName evidence="5">BiP</shortName>
    </alternativeName>
    <alternativeName>
        <fullName evidence="5">Heat shock protein 70 family protein 5</fullName>
        <shortName evidence="5">HSP70 family protein 5</shortName>
    </alternativeName>
    <alternativeName>
        <fullName evidence="5">Heat shock protein family A member 5</fullName>
    </alternativeName>
    <alternativeName>
        <fullName evidence="5">Immunoglobulin heavy chain-binding protein</fullName>
    </alternativeName>
</protein>
<reference key="1">
    <citation type="submission" date="2005-08" db="EMBL/GenBank/DDBJ databases">
        <title>Induction of the endoplasmic reticulum molecular chaperone GRP78 in hibernating ground squirrels, Spermophilus tridecemlineatus.</title>
        <authorList>
            <person name="Hapsatou M."/>
            <person name="Storey K.B."/>
        </authorList>
    </citation>
    <scope>NUCLEOTIDE SEQUENCE [MRNA]</scope>
</reference>
<proteinExistence type="evidence at transcript level"/>
<feature type="signal peptide" evidence="1">
    <location>
        <begin position="1"/>
        <end position="18"/>
    </location>
</feature>
<feature type="chain" id="PRO_0000250503" description="Endoplasmic reticulum chaperone BiP">
    <location>
        <begin position="19"/>
        <end position="654"/>
    </location>
</feature>
<feature type="region of interest" description="Required for interaction with ELAPOR1" evidence="5">
    <location>
        <begin position="1"/>
        <end position="80"/>
    </location>
</feature>
<feature type="region of interest" description="Nucleotide-binding (NBD)" evidence="5">
    <location>
        <begin position="125"/>
        <end position="280"/>
    </location>
</feature>
<feature type="region of interest" description="Interdomain linker" evidence="2">
    <location>
        <begin position="409"/>
        <end position="419"/>
    </location>
</feature>
<feature type="region of interest" description="Substrate-binding (SBD)" evidence="5">
    <location>
        <begin position="420"/>
        <end position="500"/>
    </location>
</feature>
<feature type="region of interest" description="Disordered" evidence="8">
    <location>
        <begin position="632"/>
        <end position="654"/>
    </location>
</feature>
<feature type="short sequence motif" description="Prevents secretion from ER" evidence="7">
    <location>
        <begin position="651"/>
        <end position="654"/>
    </location>
</feature>
<feature type="compositionally biased region" description="Acidic residues" evidence="8">
    <location>
        <begin position="644"/>
        <end position="654"/>
    </location>
</feature>
<feature type="binding site" evidence="5">
    <location>
        <begin position="36"/>
        <end position="39"/>
    </location>
    <ligand>
        <name>ATP</name>
        <dbReference type="ChEBI" id="CHEBI:30616"/>
    </ligand>
</feature>
<feature type="binding site" evidence="5">
    <location>
        <position position="96"/>
    </location>
    <ligand>
        <name>ATP</name>
        <dbReference type="ChEBI" id="CHEBI:30616"/>
    </ligand>
</feature>
<feature type="binding site" evidence="5">
    <location>
        <begin position="227"/>
        <end position="229"/>
    </location>
    <ligand>
        <name>ATP</name>
        <dbReference type="ChEBI" id="CHEBI:30616"/>
    </ligand>
</feature>
<feature type="binding site" evidence="5">
    <location>
        <begin position="293"/>
        <end position="300"/>
    </location>
    <ligand>
        <name>ATP</name>
        <dbReference type="ChEBI" id="CHEBI:30616"/>
    </ligand>
</feature>
<feature type="binding site" evidence="5">
    <location>
        <begin position="364"/>
        <end position="367"/>
    </location>
    <ligand>
        <name>ATP</name>
        <dbReference type="ChEBI" id="CHEBI:30616"/>
    </ligand>
</feature>
<feature type="modified residue" description="Phosphoserine" evidence="3">
    <location>
        <position position="86"/>
    </location>
</feature>
<feature type="modified residue" description="N6-acetyllysine" evidence="6">
    <location>
        <position position="125"/>
    </location>
</feature>
<feature type="modified residue" description="3'-nitrotyrosine" evidence="6">
    <location>
        <position position="160"/>
    </location>
</feature>
<feature type="modified residue" description="N6-acetyllysine" evidence="6">
    <location>
        <position position="213"/>
    </location>
</feature>
<feature type="modified residue" description="N6-acetyllysine" evidence="4">
    <location>
        <position position="271"/>
    </location>
</feature>
<feature type="modified residue" description="N6-acetyllysine" evidence="6">
    <location>
        <position position="326"/>
    </location>
</feature>
<feature type="modified residue" description="N6-acetyllysine; alternate" evidence="6">
    <location>
        <position position="353"/>
    </location>
</feature>
<feature type="modified residue" description="N6-succinyllysine" evidence="6">
    <location>
        <position position="447"/>
    </location>
</feature>
<feature type="modified residue" description="Omega-N-methylarginine" evidence="4">
    <location>
        <position position="492"/>
    </location>
</feature>
<feature type="modified residue" description="O-AMP-threonine; alternate" evidence="2">
    <location>
        <position position="518"/>
    </location>
</feature>
<feature type="modified residue" description="Phosphothreonine; alternate" evidence="5">
    <location>
        <position position="518"/>
    </location>
</feature>
<feature type="modified residue" description="N6,N6,N6-trimethyllysine; by METTL21A; in vitro" evidence="4">
    <location>
        <position position="585"/>
    </location>
</feature>
<feature type="modified residue" description="N6,N6-dimethyllysine; alternate" evidence="5">
    <location>
        <position position="585"/>
    </location>
</feature>
<feature type="modified residue" description="N6-methyllysine; alternate" evidence="5">
    <location>
        <position position="585"/>
    </location>
</feature>
<feature type="modified residue" description="N6-methyllysine" evidence="5">
    <location>
        <position position="591"/>
    </location>
</feature>
<feature type="modified residue" description="Phosphothreonine" evidence="6">
    <location>
        <position position="643"/>
    </location>
</feature>
<feature type="modified residue" description="Phosphothreonine" evidence="6">
    <location>
        <position position="648"/>
    </location>
</feature>
<feature type="modified residue" description="Phosphoserine" evidence="6">
    <location>
        <position position="649"/>
    </location>
</feature>
<feature type="cross-link" description="Glycyl lysine isopeptide (Lys-Gly) (interchain with G-Cter in SUMO2)" evidence="5">
    <location>
        <position position="352"/>
    </location>
</feature>
<feature type="cross-link" description="Glycyl lysine isopeptide (Lys-Gly) (interchain with G-Cter in SUMO1); alternate" evidence="5">
    <location>
        <position position="353"/>
    </location>
</feature>
<gene>
    <name evidence="5" type="primary">HSPA5</name>
    <name evidence="5" type="synonym">GRP78</name>
</gene>
<keyword id="KW-0007">Acetylation</keyword>
<keyword id="KW-0067">ATP-binding</keyword>
<keyword id="KW-0143">Chaperone</keyword>
<keyword id="KW-0963">Cytoplasm</keyword>
<keyword id="KW-0256">Endoplasmic reticulum</keyword>
<keyword id="KW-0378">Hydrolase</keyword>
<keyword id="KW-1017">Isopeptide bond</keyword>
<keyword id="KW-0488">Methylation</keyword>
<keyword id="KW-0944">Nitration</keyword>
<keyword id="KW-0547">Nucleotide-binding</keyword>
<keyword id="KW-0597">Phosphoprotein</keyword>
<keyword id="KW-1185">Reference proteome</keyword>
<keyword id="KW-0732">Signal</keyword>
<keyword id="KW-0832">Ubl conjugation</keyword>
<dbReference type="EC" id="3.6.4.10" evidence="5"/>
<dbReference type="EMBL" id="DQ166628">
    <property type="protein sequence ID" value="AAZ94625.1"/>
    <property type="molecule type" value="mRNA"/>
</dbReference>
<dbReference type="RefSeq" id="NP_001269183.1">
    <property type="nucleotide sequence ID" value="NM_001282254.1"/>
</dbReference>
<dbReference type="SMR" id="Q3S4T7"/>
<dbReference type="FunCoup" id="Q3S4T7">
    <property type="interactions" value="2685"/>
</dbReference>
<dbReference type="STRING" id="43179.ENSSTOP00000010092"/>
<dbReference type="GeneID" id="101974907"/>
<dbReference type="KEGG" id="iti:101974907"/>
<dbReference type="CTD" id="3309"/>
<dbReference type="eggNOG" id="KOG0100">
    <property type="taxonomic scope" value="Eukaryota"/>
</dbReference>
<dbReference type="InParanoid" id="Q3S4T7"/>
<dbReference type="OrthoDB" id="2401965at2759"/>
<dbReference type="Proteomes" id="UP000005215">
    <property type="component" value="Unassembled WGS sequence"/>
</dbReference>
<dbReference type="GO" id="GO:0009986">
    <property type="term" value="C:cell surface"/>
    <property type="evidence" value="ECO:0007669"/>
    <property type="project" value="UniProtKB-SubCell"/>
</dbReference>
<dbReference type="GO" id="GO:0005737">
    <property type="term" value="C:cytoplasm"/>
    <property type="evidence" value="ECO:0000250"/>
    <property type="project" value="UniProtKB"/>
</dbReference>
<dbReference type="GO" id="GO:0005829">
    <property type="term" value="C:cytosol"/>
    <property type="evidence" value="ECO:0000250"/>
    <property type="project" value="UniProtKB"/>
</dbReference>
<dbReference type="GO" id="GO:0005788">
    <property type="term" value="C:endoplasmic reticulum lumen"/>
    <property type="evidence" value="ECO:0007669"/>
    <property type="project" value="UniProtKB-SubCell"/>
</dbReference>
<dbReference type="GO" id="GO:0043231">
    <property type="term" value="C:intracellular membrane-bounded organelle"/>
    <property type="evidence" value="ECO:0000250"/>
    <property type="project" value="UniProtKB"/>
</dbReference>
<dbReference type="GO" id="GO:0042470">
    <property type="term" value="C:melanosome"/>
    <property type="evidence" value="ECO:0007669"/>
    <property type="project" value="UniProtKB-SubCell"/>
</dbReference>
<dbReference type="GO" id="GO:0005739">
    <property type="term" value="C:mitochondrion"/>
    <property type="evidence" value="ECO:0000250"/>
    <property type="project" value="UniProtKB"/>
</dbReference>
<dbReference type="GO" id="GO:0005524">
    <property type="term" value="F:ATP binding"/>
    <property type="evidence" value="ECO:0007669"/>
    <property type="project" value="UniProtKB-KW"/>
</dbReference>
<dbReference type="GO" id="GO:0016887">
    <property type="term" value="F:ATP hydrolysis activity"/>
    <property type="evidence" value="ECO:0000250"/>
    <property type="project" value="UniProtKB"/>
</dbReference>
<dbReference type="GO" id="GO:0140662">
    <property type="term" value="F:ATP-dependent protein folding chaperone"/>
    <property type="evidence" value="ECO:0007669"/>
    <property type="project" value="InterPro"/>
</dbReference>
<dbReference type="GO" id="GO:0035437">
    <property type="term" value="P:maintenance of protein localization in endoplasmic reticulum"/>
    <property type="evidence" value="ECO:0000250"/>
    <property type="project" value="UniProtKB"/>
</dbReference>
<dbReference type="GO" id="GO:1903895">
    <property type="term" value="P:negative regulation of IRE1-mediated unfolded protein response"/>
    <property type="evidence" value="ECO:0000250"/>
    <property type="project" value="UniProtKB"/>
</dbReference>
<dbReference type="GO" id="GO:0031333">
    <property type="term" value="P:negative regulation of protein-containing complex assembly"/>
    <property type="evidence" value="ECO:0000250"/>
    <property type="project" value="UniProtKB"/>
</dbReference>
<dbReference type="GO" id="GO:0030335">
    <property type="term" value="P:positive regulation of cell migration"/>
    <property type="evidence" value="ECO:0000250"/>
    <property type="project" value="UniProtKB"/>
</dbReference>
<dbReference type="GO" id="GO:0031204">
    <property type="term" value="P:post-translational protein targeting to membrane, translocation"/>
    <property type="evidence" value="ECO:0000250"/>
    <property type="project" value="UniProtKB"/>
</dbReference>
<dbReference type="CDD" id="cd10241">
    <property type="entry name" value="ASKHA_NBD_HSP70_BiP"/>
    <property type="match status" value="1"/>
</dbReference>
<dbReference type="FunFam" id="3.30.420.40:FF:000720">
    <property type="entry name" value="Endoplasmic reticulum chaperone BiP"/>
    <property type="match status" value="1"/>
</dbReference>
<dbReference type="FunFam" id="3.90.640.10:FF:000153">
    <property type="entry name" value="Endoplasmic reticulum chaperone BiP"/>
    <property type="match status" value="1"/>
</dbReference>
<dbReference type="FunFam" id="2.60.34.10:FF:000002">
    <property type="entry name" value="Heat shock 70 kDa"/>
    <property type="match status" value="1"/>
</dbReference>
<dbReference type="FunFam" id="3.30.30.30:FF:000001">
    <property type="entry name" value="heat shock 70 kDa protein-like"/>
    <property type="match status" value="1"/>
</dbReference>
<dbReference type="FunFam" id="1.20.1270.10:FF:000061">
    <property type="entry name" value="Heat shock protein family A (Hsp70) member 5"/>
    <property type="match status" value="1"/>
</dbReference>
<dbReference type="Gene3D" id="1.20.1270.10">
    <property type="match status" value="1"/>
</dbReference>
<dbReference type="Gene3D" id="3.30.420.40">
    <property type="match status" value="2"/>
</dbReference>
<dbReference type="Gene3D" id="3.90.640.10">
    <property type="entry name" value="Actin, Chain A, domain 4"/>
    <property type="match status" value="1"/>
</dbReference>
<dbReference type="Gene3D" id="2.60.34.10">
    <property type="entry name" value="Substrate Binding Domain Of DNAk, Chain A, domain 1"/>
    <property type="match status" value="1"/>
</dbReference>
<dbReference type="InterPro" id="IPR043129">
    <property type="entry name" value="ATPase_NBD"/>
</dbReference>
<dbReference type="InterPro" id="IPR042050">
    <property type="entry name" value="BIP_NBD"/>
</dbReference>
<dbReference type="InterPro" id="IPR018181">
    <property type="entry name" value="Heat_shock_70_CS"/>
</dbReference>
<dbReference type="InterPro" id="IPR029048">
    <property type="entry name" value="HSP70_C_sf"/>
</dbReference>
<dbReference type="InterPro" id="IPR029047">
    <property type="entry name" value="HSP70_peptide-bd_sf"/>
</dbReference>
<dbReference type="InterPro" id="IPR013126">
    <property type="entry name" value="Hsp_70_fam"/>
</dbReference>
<dbReference type="NCBIfam" id="NF001413">
    <property type="entry name" value="PRK00290.1"/>
    <property type="match status" value="1"/>
</dbReference>
<dbReference type="PANTHER" id="PTHR19375">
    <property type="entry name" value="HEAT SHOCK PROTEIN 70KDA"/>
    <property type="match status" value="1"/>
</dbReference>
<dbReference type="Pfam" id="PF00012">
    <property type="entry name" value="HSP70"/>
    <property type="match status" value="1"/>
</dbReference>
<dbReference type="PRINTS" id="PR00301">
    <property type="entry name" value="HEATSHOCK70"/>
</dbReference>
<dbReference type="SUPFAM" id="SSF53067">
    <property type="entry name" value="Actin-like ATPase domain"/>
    <property type="match status" value="2"/>
</dbReference>
<dbReference type="SUPFAM" id="SSF100934">
    <property type="entry name" value="Heat shock protein 70kD (HSP70), C-terminal subdomain"/>
    <property type="match status" value="1"/>
</dbReference>
<dbReference type="SUPFAM" id="SSF100920">
    <property type="entry name" value="Heat shock protein 70kD (HSP70), peptide-binding domain"/>
    <property type="match status" value="1"/>
</dbReference>
<dbReference type="PROSITE" id="PS00014">
    <property type="entry name" value="ER_TARGET"/>
    <property type="match status" value="1"/>
</dbReference>
<dbReference type="PROSITE" id="PS00297">
    <property type="entry name" value="HSP70_1"/>
    <property type="match status" value="1"/>
</dbReference>
<dbReference type="PROSITE" id="PS00329">
    <property type="entry name" value="HSP70_2"/>
    <property type="match status" value="1"/>
</dbReference>
<dbReference type="PROSITE" id="PS01036">
    <property type="entry name" value="HSP70_3"/>
    <property type="match status" value="1"/>
</dbReference>
<accession>Q3S4T7</accession>
<evidence type="ECO:0000250" key="1"/>
<evidence type="ECO:0000250" key="2">
    <source>
        <dbReference type="UniProtKB" id="G3I8R9"/>
    </source>
</evidence>
<evidence type="ECO:0000250" key="3">
    <source>
        <dbReference type="UniProtKB" id="P06761"/>
    </source>
</evidence>
<evidence type="ECO:0000250" key="4">
    <source>
        <dbReference type="UniProtKB" id="P0DMV8"/>
    </source>
</evidence>
<evidence type="ECO:0000250" key="5">
    <source>
        <dbReference type="UniProtKB" id="P11021"/>
    </source>
</evidence>
<evidence type="ECO:0000250" key="6">
    <source>
        <dbReference type="UniProtKB" id="P20029"/>
    </source>
</evidence>
<evidence type="ECO:0000255" key="7">
    <source>
        <dbReference type="PROSITE-ProRule" id="PRU10138"/>
    </source>
</evidence>
<evidence type="ECO:0000256" key="8">
    <source>
        <dbReference type="SAM" id="MobiDB-lite"/>
    </source>
</evidence>
<evidence type="ECO:0000305" key="9"/>
<sequence>MKLSLVAAVLLLLCAARAEEEDKKEDVGTVVGIDLGTTYSCVGVFKNGRVEIIANDQGNRITPSYVAFTPEGERLIGDAAKNQLTSNPENTVFDAKRLIGRTWNDPSVQQDIKFLPFKVVEKKTKPYIQVDIGGGQTKTFAPEEISAMVLTKMKETAEAYLGKKVTHAVVTVPAYFNDAQRQATKDAGTIAGLNVMRIINEPTAAAIAYGLDKREGEKNILVFDLGGGTFDVSLLTIDNGVFEVVATNGDTHLGGEDFDQRVMEHFIKLYKKKTGKDVRKDNRAVQKLRREVEKAKRALSSQHQARIEIESFYEGEDFSETLTRAKFEELNMDLFRSTMKPVQKVLEDSDLKKSDIDEIVLVGGSTRIPKIQQLVKEFFNGKEPSRGINPDEAVAYGAAVQAGVLSGDQDTGDLVLLDVCPLTLGIETVGGVMTKLIPRNTVVPTKKSQISSTASDNQPTVTIKVYEGERPLTKDNHLLGTFDLTGIPPAPRGVPQIEVTFEIDVNGILRVTAEDKGTGNKNKITITNDQNRLTPEEIERMVNDAEKFAEEDKRLKERIDTRNELESYAYSLKNQIGDKEKLGGKLSSEDKETMEKAVEEKIEWLESHQDADIEDFKAKKKELEEIVQPIISKLYGSAGPPPTGEEDTSERDEL</sequence>
<organism>
    <name type="scientific">Ictidomys tridecemlineatus</name>
    <name type="common">Thirteen-lined ground squirrel</name>
    <name type="synonym">Spermophilus tridecemlineatus</name>
    <dbReference type="NCBI Taxonomy" id="43179"/>
    <lineage>
        <taxon>Eukaryota</taxon>
        <taxon>Metazoa</taxon>
        <taxon>Chordata</taxon>
        <taxon>Craniata</taxon>
        <taxon>Vertebrata</taxon>
        <taxon>Euteleostomi</taxon>
        <taxon>Mammalia</taxon>
        <taxon>Eutheria</taxon>
        <taxon>Euarchontoglires</taxon>
        <taxon>Glires</taxon>
        <taxon>Rodentia</taxon>
        <taxon>Sciuromorpha</taxon>
        <taxon>Sciuridae</taxon>
        <taxon>Xerinae</taxon>
        <taxon>Marmotini</taxon>
        <taxon>Ictidomys</taxon>
    </lineage>
</organism>